<name>CAP11_ARATH</name>
<protein>
    <recommendedName>
        <fullName>Putative clathrin assembly protein At1g33340</fullName>
    </recommendedName>
</protein>
<feature type="chain" id="PRO_0000187077" description="Putative clathrin assembly protein At1g33340">
    <location>
        <begin position="1"/>
        <end position="374"/>
    </location>
</feature>
<feature type="domain" description="ENTH" evidence="2">
    <location>
        <begin position="30"/>
        <end position="163"/>
    </location>
</feature>
<feature type="sequence conflict" description="In Ref. 3; AAR07515 and 4; BAD43815." evidence="3" ref="3 4">
    <original>K</original>
    <variation>R</variation>
    <location>
        <position position="366"/>
    </location>
</feature>
<reference key="1">
    <citation type="journal article" date="2000" name="Nature">
        <title>Sequence and analysis of chromosome 1 of the plant Arabidopsis thaliana.</title>
        <authorList>
            <person name="Theologis A."/>
            <person name="Ecker J.R."/>
            <person name="Palm C.J."/>
            <person name="Federspiel N.A."/>
            <person name="Kaul S."/>
            <person name="White O."/>
            <person name="Alonso J."/>
            <person name="Altafi H."/>
            <person name="Araujo R."/>
            <person name="Bowman C.L."/>
            <person name="Brooks S.Y."/>
            <person name="Buehler E."/>
            <person name="Chan A."/>
            <person name="Chao Q."/>
            <person name="Chen H."/>
            <person name="Cheuk R.F."/>
            <person name="Chin C.W."/>
            <person name="Chung M.K."/>
            <person name="Conn L."/>
            <person name="Conway A.B."/>
            <person name="Conway A.R."/>
            <person name="Creasy T.H."/>
            <person name="Dewar K."/>
            <person name="Dunn P."/>
            <person name="Etgu P."/>
            <person name="Feldblyum T.V."/>
            <person name="Feng J.-D."/>
            <person name="Fong B."/>
            <person name="Fujii C.Y."/>
            <person name="Gill J.E."/>
            <person name="Goldsmith A.D."/>
            <person name="Haas B."/>
            <person name="Hansen N.F."/>
            <person name="Hughes B."/>
            <person name="Huizar L."/>
            <person name="Hunter J.L."/>
            <person name="Jenkins J."/>
            <person name="Johnson-Hopson C."/>
            <person name="Khan S."/>
            <person name="Khaykin E."/>
            <person name="Kim C.J."/>
            <person name="Koo H.L."/>
            <person name="Kremenetskaia I."/>
            <person name="Kurtz D.B."/>
            <person name="Kwan A."/>
            <person name="Lam B."/>
            <person name="Langin-Hooper S."/>
            <person name="Lee A."/>
            <person name="Lee J.M."/>
            <person name="Lenz C.A."/>
            <person name="Li J.H."/>
            <person name="Li Y.-P."/>
            <person name="Lin X."/>
            <person name="Liu S.X."/>
            <person name="Liu Z.A."/>
            <person name="Luros J.S."/>
            <person name="Maiti R."/>
            <person name="Marziali A."/>
            <person name="Militscher J."/>
            <person name="Miranda M."/>
            <person name="Nguyen M."/>
            <person name="Nierman W.C."/>
            <person name="Osborne B.I."/>
            <person name="Pai G."/>
            <person name="Peterson J."/>
            <person name="Pham P.K."/>
            <person name="Rizzo M."/>
            <person name="Rooney T."/>
            <person name="Rowley D."/>
            <person name="Sakano H."/>
            <person name="Salzberg S.L."/>
            <person name="Schwartz J.R."/>
            <person name="Shinn P."/>
            <person name="Southwick A.M."/>
            <person name="Sun H."/>
            <person name="Tallon L.J."/>
            <person name="Tambunga G."/>
            <person name="Toriumi M.J."/>
            <person name="Town C.D."/>
            <person name="Utterback T."/>
            <person name="Van Aken S."/>
            <person name="Vaysberg M."/>
            <person name="Vysotskaia V.S."/>
            <person name="Walker M."/>
            <person name="Wu D."/>
            <person name="Yu G."/>
            <person name="Fraser C.M."/>
            <person name="Venter J.C."/>
            <person name="Davis R.W."/>
        </authorList>
    </citation>
    <scope>NUCLEOTIDE SEQUENCE [LARGE SCALE GENOMIC DNA]</scope>
    <source>
        <strain>cv. Columbia</strain>
    </source>
</reference>
<reference key="2">
    <citation type="journal article" date="2017" name="Plant J.">
        <title>Araport11: a complete reannotation of the Arabidopsis thaliana reference genome.</title>
        <authorList>
            <person name="Cheng C.Y."/>
            <person name="Krishnakumar V."/>
            <person name="Chan A.P."/>
            <person name="Thibaud-Nissen F."/>
            <person name="Schobel S."/>
            <person name="Town C.D."/>
        </authorList>
    </citation>
    <scope>GENOME REANNOTATION</scope>
    <source>
        <strain>cv. Columbia</strain>
    </source>
</reference>
<reference key="3">
    <citation type="submission" date="2003-10" db="EMBL/GenBank/DDBJ databases">
        <title>Arabidopsis ORF clones.</title>
        <authorList>
            <person name="Shinn P."/>
            <person name="Chen H."/>
            <person name="Cheuk R.F."/>
            <person name="Kim C.J."/>
            <person name="Carninci P."/>
            <person name="Hayashizaki Y."/>
            <person name="Ishida J."/>
            <person name="Kamiya A."/>
            <person name="Kawai J."/>
            <person name="Narusaka M."/>
            <person name="Sakurai T."/>
            <person name="Satou M."/>
            <person name="Seki M."/>
            <person name="Shinozaki K."/>
            <person name="Ecker J.R."/>
        </authorList>
    </citation>
    <scope>NUCLEOTIDE SEQUENCE [LARGE SCALE MRNA]</scope>
    <source>
        <strain>cv. Columbia</strain>
    </source>
</reference>
<reference key="4">
    <citation type="submission" date="2004-09" db="EMBL/GenBank/DDBJ databases">
        <title>Large-scale analysis of RIKEN Arabidopsis full-length (RAFL) cDNAs.</title>
        <authorList>
            <person name="Totoki Y."/>
            <person name="Seki M."/>
            <person name="Ishida J."/>
            <person name="Nakajima M."/>
            <person name="Enju A."/>
            <person name="Kamiya A."/>
            <person name="Narusaka M."/>
            <person name="Shin-i T."/>
            <person name="Nakagawa M."/>
            <person name="Sakamoto N."/>
            <person name="Oishi K."/>
            <person name="Kohara Y."/>
            <person name="Kobayashi M."/>
            <person name="Toyoda A."/>
            <person name="Sakaki Y."/>
            <person name="Sakurai T."/>
            <person name="Iida K."/>
            <person name="Akiyama K."/>
            <person name="Satou M."/>
            <person name="Toyoda T."/>
            <person name="Konagaya A."/>
            <person name="Carninci P."/>
            <person name="Kawai J."/>
            <person name="Hayashizaki Y."/>
            <person name="Shinozaki K."/>
        </authorList>
    </citation>
    <scope>NUCLEOTIDE SEQUENCE [LARGE SCALE MRNA]</scope>
    <source>
        <strain>cv. Columbia</strain>
    </source>
</reference>
<reference key="5">
    <citation type="journal article" date="2007" name="Mol. Cell. Proteomics">
        <title>Multidimensional protein identification technology (MudPIT) analysis of ubiquitinated proteins in plants.</title>
        <authorList>
            <person name="Maor R."/>
            <person name="Jones A."/>
            <person name="Nuehse T.S."/>
            <person name="Studholme D.J."/>
            <person name="Peck S.C."/>
            <person name="Shirasu K."/>
        </authorList>
    </citation>
    <scope>IDENTIFICATION BY MASS SPECTROMETRY [LARGE SCALE ANALYSIS]</scope>
    <source>
        <strain>cv. Landsberg erecta</strain>
    </source>
</reference>
<dbReference type="EMBL" id="AC027035">
    <property type="protein sequence ID" value="AAG51280.1"/>
    <property type="molecule type" value="Genomic_DNA"/>
</dbReference>
<dbReference type="EMBL" id="AC051630">
    <property type="protein sequence ID" value="AAG51212.1"/>
    <property type="molecule type" value="Genomic_DNA"/>
</dbReference>
<dbReference type="EMBL" id="CP002684">
    <property type="protein sequence ID" value="AEE31585.1"/>
    <property type="molecule type" value="Genomic_DNA"/>
</dbReference>
<dbReference type="EMBL" id="BT010651">
    <property type="protein sequence ID" value="AAR07515.1"/>
    <property type="molecule type" value="mRNA"/>
</dbReference>
<dbReference type="EMBL" id="AK176052">
    <property type="protein sequence ID" value="BAD43815.1"/>
    <property type="molecule type" value="mRNA"/>
</dbReference>
<dbReference type="PIR" id="B86457">
    <property type="entry name" value="B86457"/>
</dbReference>
<dbReference type="RefSeq" id="NP_174602.1">
    <property type="nucleotide sequence ID" value="NM_103061.3"/>
</dbReference>
<dbReference type="SMR" id="Q9C502"/>
<dbReference type="FunCoup" id="Q9C502">
    <property type="interactions" value="87"/>
</dbReference>
<dbReference type="STRING" id="3702.Q9C502"/>
<dbReference type="PaxDb" id="3702-AT1G33340.1"/>
<dbReference type="ProteomicsDB" id="240249"/>
<dbReference type="EnsemblPlants" id="AT1G33340.1">
    <property type="protein sequence ID" value="AT1G33340.1"/>
    <property type="gene ID" value="AT1G33340"/>
</dbReference>
<dbReference type="GeneID" id="840228"/>
<dbReference type="Gramene" id="AT1G33340.1">
    <property type="protein sequence ID" value="AT1G33340.1"/>
    <property type="gene ID" value="AT1G33340"/>
</dbReference>
<dbReference type="KEGG" id="ath:AT1G33340"/>
<dbReference type="Araport" id="AT1G33340"/>
<dbReference type="TAIR" id="AT1G33340">
    <property type="gene designation" value="PICALM8"/>
</dbReference>
<dbReference type="eggNOG" id="KOG0251">
    <property type="taxonomic scope" value="Eukaryota"/>
</dbReference>
<dbReference type="HOGENOM" id="CLU_039452_0_0_1"/>
<dbReference type="InParanoid" id="Q9C502"/>
<dbReference type="OMA" id="RMQWAIN"/>
<dbReference type="OrthoDB" id="1932749at2759"/>
<dbReference type="PhylomeDB" id="Q9C502"/>
<dbReference type="PRO" id="PR:Q9C502"/>
<dbReference type="Proteomes" id="UP000006548">
    <property type="component" value="Chromosome 1"/>
</dbReference>
<dbReference type="ExpressionAtlas" id="Q9C502">
    <property type="expression patterns" value="baseline and differential"/>
</dbReference>
<dbReference type="GO" id="GO:0005905">
    <property type="term" value="C:clathrin-coated pit"/>
    <property type="evidence" value="ECO:0007669"/>
    <property type="project" value="UniProtKB-SubCell"/>
</dbReference>
<dbReference type="GO" id="GO:0030136">
    <property type="term" value="C:clathrin-coated vesicle"/>
    <property type="evidence" value="ECO:0007669"/>
    <property type="project" value="UniProtKB-SubCell"/>
</dbReference>
<dbReference type="GO" id="GO:0005794">
    <property type="term" value="C:Golgi apparatus"/>
    <property type="evidence" value="ECO:0007669"/>
    <property type="project" value="UniProtKB-SubCell"/>
</dbReference>
<dbReference type="GO" id="GO:0005545">
    <property type="term" value="F:1-phosphatidylinositol binding"/>
    <property type="evidence" value="ECO:0007669"/>
    <property type="project" value="InterPro"/>
</dbReference>
<dbReference type="GO" id="GO:0030276">
    <property type="term" value="F:clathrin binding"/>
    <property type="evidence" value="ECO:0007669"/>
    <property type="project" value="InterPro"/>
</dbReference>
<dbReference type="GO" id="GO:0048268">
    <property type="term" value="P:clathrin coat assembly"/>
    <property type="evidence" value="ECO:0007669"/>
    <property type="project" value="InterPro"/>
</dbReference>
<dbReference type="GO" id="GO:0072583">
    <property type="term" value="P:clathrin-dependent endocytosis"/>
    <property type="evidence" value="ECO:0007669"/>
    <property type="project" value="InterPro"/>
</dbReference>
<dbReference type="CDD" id="cd16987">
    <property type="entry name" value="ANTH_N_AP180_plant"/>
    <property type="match status" value="1"/>
</dbReference>
<dbReference type="FunFam" id="1.20.58.150:FF:000008">
    <property type="entry name" value="Putative clathrin assembly protein At1g33340"/>
    <property type="match status" value="1"/>
</dbReference>
<dbReference type="FunFam" id="1.25.40.90:FF:000033">
    <property type="entry name" value="putative clathrin assembly protein At1g33340"/>
    <property type="match status" value="1"/>
</dbReference>
<dbReference type="Gene3D" id="1.25.40.90">
    <property type="match status" value="1"/>
</dbReference>
<dbReference type="Gene3D" id="1.20.58.150">
    <property type="entry name" value="ANTH domain"/>
    <property type="match status" value="1"/>
</dbReference>
<dbReference type="InterPro" id="IPR011417">
    <property type="entry name" value="ANTH_dom"/>
</dbReference>
<dbReference type="InterPro" id="IPR014712">
    <property type="entry name" value="ANTH_dom_sf"/>
</dbReference>
<dbReference type="InterPro" id="IPR048050">
    <property type="entry name" value="ANTH_N_plant"/>
</dbReference>
<dbReference type="InterPro" id="IPR045192">
    <property type="entry name" value="AP180-like"/>
</dbReference>
<dbReference type="InterPro" id="IPR013809">
    <property type="entry name" value="ENTH"/>
</dbReference>
<dbReference type="InterPro" id="IPR008942">
    <property type="entry name" value="ENTH_VHS"/>
</dbReference>
<dbReference type="PANTHER" id="PTHR22951">
    <property type="entry name" value="CLATHRIN ASSEMBLY PROTEIN"/>
    <property type="match status" value="1"/>
</dbReference>
<dbReference type="PANTHER" id="PTHR22951:SF70">
    <property type="entry name" value="OS11G0244600 PROTEIN"/>
    <property type="match status" value="1"/>
</dbReference>
<dbReference type="Pfam" id="PF07651">
    <property type="entry name" value="ANTH"/>
    <property type="match status" value="1"/>
</dbReference>
<dbReference type="SMART" id="SM00273">
    <property type="entry name" value="ENTH"/>
    <property type="match status" value="1"/>
</dbReference>
<dbReference type="SUPFAM" id="SSF48464">
    <property type="entry name" value="ENTH/VHS domain"/>
    <property type="match status" value="1"/>
</dbReference>
<dbReference type="SUPFAM" id="SSF89009">
    <property type="entry name" value="GAT-like domain"/>
    <property type="match status" value="1"/>
</dbReference>
<dbReference type="PROSITE" id="PS50942">
    <property type="entry name" value="ENTH"/>
    <property type="match status" value="1"/>
</dbReference>
<proteinExistence type="evidence at protein level"/>
<accession>Q9C502</accession>
<accession>Q67ZR5</accession>
<sequence>MRLDLSAKFRQVLGLAKDHASIGRAIVQNYNEKAFFDIEVAVVRATSHDDCPVDDKTMHEILFLVSNTPGSIPFLAEQISRRLAKTRDCLVAGKTLLLFHRLLRGSSRSIEQQLHIAHTSGHLQIGCSWFMMSLDSRSFVFLQNYVAYLQERVGWIINQAGKLEPVMSGGTKFSRYKEKSMDLVFHILPKCQEFIAQVLKCSPVDAWPIDNLVQAATGNILKESFQVYMTYSDGMTALVSMLFDLSRPARDLACGMLRKASQQIQDLRILYDKCRGFAGMKSLDYPSVQAISMDHIVALEECSSYGGKRGFSLSTNLRDAITCNELKQEQHSASFSSTSPFSLPVETKISMVWVVFDNEDGEESDKQTEKAYER</sequence>
<comment type="subcellular location">
    <subcellularLocation>
        <location evidence="1">Membrane</location>
        <location evidence="1">Clathrin-coated pit</location>
    </subcellularLocation>
    <subcellularLocation>
        <location evidence="1">Golgi apparatus</location>
    </subcellularLocation>
    <subcellularLocation>
        <location evidence="1">Cytoplasmic vesicle</location>
        <location evidence="1">Clathrin-coated vesicle</location>
    </subcellularLocation>
    <text evidence="1">Colocalized with clathrin in the Golgi area.</text>
</comment>
<gene>
    <name type="ordered locus">At1g33340</name>
    <name type="ORF">F10C21.3</name>
    <name type="ORF">T16O9.2</name>
</gene>
<keyword id="KW-0168">Coated pit</keyword>
<keyword id="KW-0968">Cytoplasmic vesicle</keyword>
<keyword id="KW-0254">Endocytosis</keyword>
<keyword id="KW-0333">Golgi apparatus</keyword>
<keyword id="KW-0472">Membrane</keyword>
<keyword id="KW-1185">Reference proteome</keyword>
<evidence type="ECO:0000250" key="1"/>
<evidence type="ECO:0000255" key="2">
    <source>
        <dbReference type="PROSITE-ProRule" id="PRU00243"/>
    </source>
</evidence>
<evidence type="ECO:0000305" key="3"/>
<organism>
    <name type="scientific">Arabidopsis thaliana</name>
    <name type="common">Mouse-ear cress</name>
    <dbReference type="NCBI Taxonomy" id="3702"/>
    <lineage>
        <taxon>Eukaryota</taxon>
        <taxon>Viridiplantae</taxon>
        <taxon>Streptophyta</taxon>
        <taxon>Embryophyta</taxon>
        <taxon>Tracheophyta</taxon>
        <taxon>Spermatophyta</taxon>
        <taxon>Magnoliopsida</taxon>
        <taxon>eudicotyledons</taxon>
        <taxon>Gunneridae</taxon>
        <taxon>Pentapetalae</taxon>
        <taxon>rosids</taxon>
        <taxon>malvids</taxon>
        <taxon>Brassicales</taxon>
        <taxon>Brassicaceae</taxon>
        <taxon>Camelineae</taxon>
        <taxon>Arabidopsis</taxon>
    </lineage>
</organism>